<protein>
    <recommendedName>
        <fullName evidence="3">Glucokinase</fullName>
        <ecNumber evidence="2">2.7.1.2</ecNumber>
    </recommendedName>
    <alternativeName>
        <fullName>Glucose kinase</fullName>
    </alternativeName>
</protein>
<comment type="function">
    <text evidence="2">An ATP-dependent kinase that phosphorylates glucose to make glucose-6-phosphate, not active on fructose, galactose or mannose. Not highly important in wild-type E.coli as glucose is transported into the cell by the PTS system as glucose 6-phosphate.</text>
</comment>
<comment type="catalytic activity">
    <reaction evidence="2">
        <text>D-glucose + ATP = D-glucose 6-phosphate + ADP + H(+)</text>
        <dbReference type="Rhea" id="RHEA:17825"/>
        <dbReference type="ChEBI" id="CHEBI:4167"/>
        <dbReference type="ChEBI" id="CHEBI:15378"/>
        <dbReference type="ChEBI" id="CHEBI:30616"/>
        <dbReference type="ChEBI" id="CHEBI:61548"/>
        <dbReference type="ChEBI" id="CHEBI:456216"/>
        <dbReference type="EC" id="2.7.1.2"/>
    </reaction>
    <physiologicalReaction direction="left-to-right" evidence="2">
        <dbReference type="Rhea" id="RHEA:17826"/>
    </physiologicalReaction>
</comment>
<comment type="biophysicochemical properties">
    <kinetics>
        <KM evidence="2">0.78 mM for glucose</KM>
        <KM evidence="2">3.76 mM for ATP</KM>
    </kinetics>
</comment>
<comment type="subcellular location">
    <subcellularLocation>
        <location evidence="2">Cytoplasm</location>
    </subcellularLocation>
</comment>
<comment type="induction">
    <text evidence="2">Constitutively expressed, weakly repressed by growth on glucose, repression may be partially controlled by cra (fruR).</text>
</comment>
<comment type="disruption phenotype">
    <text evidence="2">No glucokinase activity, no growth phenotype in an otherwise wild-type cell.</text>
</comment>
<comment type="similarity">
    <text evidence="4">Belongs to the bacterial glucokinase family.</text>
</comment>
<reference key="1">
    <citation type="journal article" date="1997" name="J. Bacteriol.">
        <title>Molecular characterization of glucokinase from Escherichia coli K-12.</title>
        <authorList>
            <person name="Meyer D."/>
            <person name="Schneider-Fresenius C."/>
            <person name="Horlacher R."/>
            <person name="Peist R."/>
            <person name="Boos W.W."/>
        </authorList>
    </citation>
    <scope>NUCLEOTIDE SEQUENCE [GENOMIC DNA]</scope>
    <scope>FUNCTION</scope>
    <scope>CATALYTIC ACTIVITY</scope>
    <scope>BIOPHYSICOCHEMICAL PROPERTIES</scope>
    <scope>SUBCELLULAR LOCATION</scope>
    <scope>INDUCTION</scope>
    <scope>DISRUPTION PHENOTYPE</scope>
    <source>
        <strain>K12 / MC4100 / ATCC 35695 / DSM 6574</strain>
    </source>
</reference>
<reference key="2">
    <citation type="journal article" date="1997" name="DNA Res.">
        <title>Construction of a contiguous 874-kb sequence of the Escherichia coli-K12 genome corresponding to 50.0-68.8 min on the linkage map and analysis of its sequence features.</title>
        <authorList>
            <person name="Yamamoto Y."/>
            <person name="Aiba H."/>
            <person name="Baba T."/>
            <person name="Hayashi K."/>
            <person name="Inada T."/>
            <person name="Isono K."/>
            <person name="Itoh T."/>
            <person name="Kimura S."/>
            <person name="Kitagawa M."/>
            <person name="Makino K."/>
            <person name="Miki T."/>
            <person name="Mitsuhashi N."/>
            <person name="Mizobuchi K."/>
            <person name="Mori H."/>
            <person name="Nakade S."/>
            <person name="Nakamura Y."/>
            <person name="Nashimoto H."/>
            <person name="Oshima T."/>
            <person name="Oyama S."/>
            <person name="Saito N."/>
            <person name="Sampei G."/>
            <person name="Satoh Y."/>
            <person name="Sivasundaram S."/>
            <person name="Tagami H."/>
            <person name="Takahashi H."/>
            <person name="Takeda J."/>
            <person name="Takemoto K."/>
            <person name="Uehara K."/>
            <person name="Wada C."/>
            <person name="Yamagata S."/>
            <person name="Horiuchi T."/>
        </authorList>
    </citation>
    <scope>NUCLEOTIDE SEQUENCE [LARGE SCALE GENOMIC DNA]</scope>
    <source>
        <strain>K12 / W3110 / ATCC 27325 / DSM 5911</strain>
    </source>
</reference>
<reference key="3">
    <citation type="journal article" date="1997" name="Science">
        <title>The complete genome sequence of Escherichia coli K-12.</title>
        <authorList>
            <person name="Blattner F.R."/>
            <person name="Plunkett G. III"/>
            <person name="Bloch C.A."/>
            <person name="Perna N.T."/>
            <person name="Burland V."/>
            <person name="Riley M."/>
            <person name="Collado-Vides J."/>
            <person name="Glasner J.D."/>
            <person name="Rode C.K."/>
            <person name="Mayhew G.F."/>
            <person name="Gregor J."/>
            <person name="Davis N.W."/>
            <person name="Kirkpatrick H.A."/>
            <person name="Goeden M.A."/>
            <person name="Rose D.J."/>
            <person name="Mau B."/>
            <person name="Shao Y."/>
        </authorList>
    </citation>
    <scope>NUCLEOTIDE SEQUENCE [LARGE SCALE GENOMIC DNA]</scope>
    <source>
        <strain>K12 / MG1655 / ATCC 47076</strain>
    </source>
</reference>
<reference key="4">
    <citation type="journal article" date="2006" name="Mol. Syst. Biol.">
        <title>Highly accurate genome sequences of Escherichia coli K-12 strains MG1655 and W3110.</title>
        <authorList>
            <person name="Hayashi K."/>
            <person name="Morooka N."/>
            <person name="Yamamoto Y."/>
            <person name="Fujita K."/>
            <person name="Isono K."/>
            <person name="Choi S."/>
            <person name="Ohtsubo E."/>
            <person name="Baba T."/>
            <person name="Wanner B.L."/>
            <person name="Mori H."/>
            <person name="Horiuchi T."/>
        </authorList>
    </citation>
    <scope>NUCLEOTIDE SEQUENCE [LARGE SCALE GENOMIC DNA]</scope>
    <source>
        <strain>K12 / W3110 / ATCC 27325 / DSM 5911</strain>
    </source>
</reference>
<sequence length="321" mass="34723">MTKYALVGDVGGTNARLALCDIASGEISQAKTYSGLDYPSLEAVIRVYLEEHKVEVKDGCIAIACPITGDWVAMTNHTWAFSIAEMKKNLGFSHLEIINDFTAVSMAIPMLKKEHLIQFGGAEPVEGKPIAVYGAGTGLGVAHLVHVDKRWVSLPGEGGHVDFAPNSEEEAIILEILRAEIGHVSAERVLSGPGLVNLYRAIVKADNRLPENLKPKDITERALADSCTDCRRALSLFCVIMGRFGGNLALNLGTFGGVFIAGGIVPRFLEFFKASGFRAAFEDKGRFKEYVHDIPVYLIVHDNPGLLGSGAHLRQTLGHIL</sequence>
<keyword id="KW-0067">ATP-binding</keyword>
<keyword id="KW-0963">Cytoplasm</keyword>
<keyword id="KW-0324">Glycolysis</keyword>
<keyword id="KW-0418">Kinase</keyword>
<keyword id="KW-0547">Nucleotide-binding</keyword>
<keyword id="KW-1185">Reference proteome</keyword>
<keyword id="KW-0808">Transferase</keyword>
<proteinExistence type="evidence at protein level"/>
<feature type="chain" id="PRO_0000215124" description="Glucokinase">
    <location>
        <begin position="1"/>
        <end position="321"/>
    </location>
</feature>
<feature type="binding site" evidence="1">
    <location>
        <begin position="8"/>
        <end position="13"/>
    </location>
    <ligand>
        <name>ATP</name>
        <dbReference type="ChEBI" id="CHEBI:30616"/>
    </ligand>
</feature>
<feature type="sequence conflict" description="In Ref. 1; AAA64506." evidence="4" ref="1">
    <original>I</original>
    <variation>N</variation>
    <location>
        <position position="108"/>
    </location>
</feature>
<feature type="sequence conflict" description="In Ref. 1; AAA64506." evidence="4" ref="1">
    <original>RV</original>
    <variation>AC</variation>
    <location>
        <begin position="188"/>
        <end position="189"/>
    </location>
</feature>
<feature type="sequence conflict" description="In Ref. 1; AAA64506." evidence="4" ref="1">
    <original>A</original>
    <variation>G</variation>
    <location>
        <position position="274"/>
    </location>
</feature>
<accession>P0A6V8</accession>
<accession>P46880</accession>
<accession>P78276</accession>
<name>GLK_ECOLI</name>
<organism>
    <name type="scientific">Escherichia coli (strain K12)</name>
    <dbReference type="NCBI Taxonomy" id="83333"/>
    <lineage>
        <taxon>Bacteria</taxon>
        <taxon>Pseudomonadati</taxon>
        <taxon>Pseudomonadota</taxon>
        <taxon>Gammaproteobacteria</taxon>
        <taxon>Enterobacterales</taxon>
        <taxon>Enterobacteriaceae</taxon>
        <taxon>Escherichia</taxon>
    </lineage>
</organism>
<gene>
    <name evidence="3" type="primary">glk</name>
    <name type="ordered locus">b2388</name>
    <name type="ordered locus">JW2385</name>
</gene>
<dbReference type="EC" id="2.7.1.2" evidence="2"/>
<dbReference type="EMBL" id="U22490">
    <property type="protein sequence ID" value="AAA64506.1"/>
    <property type="molecule type" value="Genomic_DNA"/>
</dbReference>
<dbReference type="EMBL" id="U00096">
    <property type="protein sequence ID" value="AAC75447.1"/>
    <property type="molecule type" value="Genomic_DNA"/>
</dbReference>
<dbReference type="EMBL" id="AP009048">
    <property type="protein sequence ID" value="BAA16258.1"/>
    <property type="molecule type" value="Genomic_DNA"/>
</dbReference>
<dbReference type="PIR" id="A65013">
    <property type="entry name" value="A65013"/>
</dbReference>
<dbReference type="RefSeq" id="NP_416889.1">
    <property type="nucleotide sequence ID" value="NC_000913.3"/>
</dbReference>
<dbReference type="RefSeq" id="WP_000170346.1">
    <property type="nucleotide sequence ID" value="NZ_LN832404.1"/>
</dbReference>
<dbReference type="SMR" id="P0A6V8"/>
<dbReference type="BioGRID" id="4260563">
    <property type="interactions" value="13"/>
</dbReference>
<dbReference type="BioGRID" id="851199">
    <property type="interactions" value="1"/>
</dbReference>
<dbReference type="FunCoup" id="P0A6V8">
    <property type="interactions" value="365"/>
</dbReference>
<dbReference type="IntAct" id="P0A6V8">
    <property type="interactions" value="5"/>
</dbReference>
<dbReference type="STRING" id="511145.b2388"/>
<dbReference type="DrugBank" id="DB02379">
    <property type="generic name" value="Beta-D-Glucose"/>
</dbReference>
<dbReference type="jPOST" id="P0A6V8"/>
<dbReference type="PaxDb" id="511145-b2388"/>
<dbReference type="EnsemblBacteria" id="AAC75447">
    <property type="protein sequence ID" value="AAC75447"/>
    <property type="gene ID" value="b2388"/>
</dbReference>
<dbReference type="GeneID" id="75202543"/>
<dbReference type="GeneID" id="946858"/>
<dbReference type="KEGG" id="ecj:JW2385"/>
<dbReference type="KEGG" id="eco:b2388"/>
<dbReference type="KEGG" id="ecoc:C3026_13275"/>
<dbReference type="PATRIC" id="fig|1411691.4.peg.4340"/>
<dbReference type="EchoBASE" id="EB2791"/>
<dbReference type="eggNOG" id="COG0837">
    <property type="taxonomic scope" value="Bacteria"/>
</dbReference>
<dbReference type="HOGENOM" id="CLU_042582_1_0_6"/>
<dbReference type="InParanoid" id="P0A6V8"/>
<dbReference type="OMA" id="NNHWRLS"/>
<dbReference type="OrthoDB" id="9800595at2"/>
<dbReference type="PhylomeDB" id="P0A6V8"/>
<dbReference type="BioCyc" id="EcoCyc:GLUCOKIN-MONOMER"/>
<dbReference type="BioCyc" id="MetaCyc:GLUCOKIN-MONOMER"/>
<dbReference type="SABIO-RK" id="P0A6V8"/>
<dbReference type="PRO" id="PR:P0A6V8"/>
<dbReference type="Proteomes" id="UP000000625">
    <property type="component" value="Chromosome"/>
</dbReference>
<dbReference type="GO" id="GO:0005829">
    <property type="term" value="C:cytosol"/>
    <property type="evidence" value="ECO:0000314"/>
    <property type="project" value="EcoCyc"/>
</dbReference>
<dbReference type="GO" id="GO:0005524">
    <property type="term" value="F:ATP binding"/>
    <property type="evidence" value="ECO:0007669"/>
    <property type="project" value="UniProtKB-UniRule"/>
</dbReference>
<dbReference type="GO" id="GO:0005536">
    <property type="term" value="F:D-glucose binding"/>
    <property type="evidence" value="ECO:0007669"/>
    <property type="project" value="InterPro"/>
</dbReference>
<dbReference type="GO" id="GO:0004340">
    <property type="term" value="F:glucokinase activity"/>
    <property type="evidence" value="ECO:0000314"/>
    <property type="project" value="EcoCyc"/>
</dbReference>
<dbReference type="GO" id="GO:0006096">
    <property type="term" value="P:glycolytic process"/>
    <property type="evidence" value="ECO:0000269"/>
    <property type="project" value="EcoCyc"/>
</dbReference>
<dbReference type="CDD" id="cd24008">
    <property type="entry name" value="ASKHA_NBD_GLK"/>
    <property type="match status" value="1"/>
</dbReference>
<dbReference type="FunFam" id="3.30.420.40:FF:000045">
    <property type="entry name" value="Glucokinase"/>
    <property type="match status" value="1"/>
</dbReference>
<dbReference type="FunFam" id="3.40.367.20:FF:000002">
    <property type="entry name" value="Glucokinase"/>
    <property type="match status" value="1"/>
</dbReference>
<dbReference type="Gene3D" id="3.30.420.40">
    <property type="match status" value="1"/>
</dbReference>
<dbReference type="Gene3D" id="3.40.367.20">
    <property type="match status" value="1"/>
</dbReference>
<dbReference type="HAMAP" id="MF_00524">
    <property type="entry name" value="Glucokinase"/>
    <property type="match status" value="1"/>
</dbReference>
<dbReference type="InterPro" id="IPR043129">
    <property type="entry name" value="ATPase_NBD"/>
</dbReference>
<dbReference type="InterPro" id="IPR050201">
    <property type="entry name" value="Bacterial_glucokinase"/>
</dbReference>
<dbReference type="InterPro" id="IPR003836">
    <property type="entry name" value="Glucokinase"/>
</dbReference>
<dbReference type="NCBIfam" id="TIGR00749">
    <property type="entry name" value="glk"/>
    <property type="match status" value="1"/>
</dbReference>
<dbReference type="NCBIfam" id="NF001414">
    <property type="entry name" value="PRK00292.1-1"/>
    <property type="match status" value="1"/>
</dbReference>
<dbReference type="NCBIfam" id="NF001416">
    <property type="entry name" value="PRK00292.1-3"/>
    <property type="match status" value="1"/>
</dbReference>
<dbReference type="PANTHER" id="PTHR47690">
    <property type="entry name" value="GLUCOKINASE"/>
    <property type="match status" value="1"/>
</dbReference>
<dbReference type="PANTHER" id="PTHR47690:SF1">
    <property type="entry name" value="GLUCOKINASE"/>
    <property type="match status" value="1"/>
</dbReference>
<dbReference type="Pfam" id="PF02685">
    <property type="entry name" value="Glucokinase"/>
    <property type="match status" value="1"/>
</dbReference>
<dbReference type="SUPFAM" id="SSF53067">
    <property type="entry name" value="Actin-like ATPase domain"/>
    <property type="match status" value="1"/>
</dbReference>
<evidence type="ECO:0000255" key="1"/>
<evidence type="ECO:0000269" key="2">
    <source>
    </source>
</evidence>
<evidence type="ECO:0000303" key="3">
    <source>
    </source>
</evidence>
<evidence type="ECO:0000305" key="4"/>